<evidence type="ECO:0000255" key="1">
    <source>
        <dbReference type="HAMAP-Rule" id="MF_00260"/>
    </source>
</evidence>
<keyword id="KW-0627">Porphyrin biosynthesis</keyword>
<keyword id="KW-0808">Transferase</keyword>
<protein>
    <recommendedName>
        <fullName evidence="1">Porphobilinogen deaminase</fullName>
        <shortName evidence="1">PBG</shortName>
        <ecNumber evidence="1">2.5.1.61</ecNumber>
    </recommendedName>
    <alternativeName>
        <fullName evidence="1">Hydroxymethylbilane synthase</fullName>
        <shortName evidence="1">HMBS</shortName>
    </alternativeName>
    <alternativeName>
        <fullName evidence="1">Pre-uroporphyrinogen synthase</fullName>
    </alternativeName>
</protein>
<organism>
    <name type="scientific">Nitratidesulfovibrio vulgaris (strain DSM 19637 / Miyazaki F)</name>
    <name type="common">Desulfovibrio vulgaris</name>
    <dbReference type="NCBI Taxonomy" id="883"/>
    <lineage>
        <taxon>Bacteria</taxon>
        <taxon>Pseudomonadati</taxon>
        <taxon>Thermodesulfobacteriota</taxon>
        <taxon>Desulfovibrionia</taxon>
        <taxon>Desulfovibrionales</taxon>
        <taxon>Desulfovibrionaceae</taxon>
        <taxon>Nitratidesulfovibrio</taxon>
    </lineage>
</organism>
<reference key="1">
    <citation type="submission" date="2008-10" db="EMBL/GenBank/DDBJ databases">
        <title>Complete sequence of Desulfovibrio vulgaris str. 'Miyazaki F'.</title>
        <authorList>
            <person name="Lucas S."/>
            <person name="Copeland A."/>
            <person name="Lapidus A."/>
            <person name="Glavina del Rio T."/>
            <person name="Dalin E."/>
            <person name="Tice H."/>
            <person name="Bruce D."/>
            <person name="Goodwin L."/>
            <person name="Pitluck S."/>
            <person name="Sims D."/>
            <person name="Brettin T."/>
            <person name="Detter J.C."/>
            <person name="Han C."/>
            <person name="Larimer F."/>
            <person name="Land M."/>
            <person name="Hauser L."/>
            <person name="Kyrpides N."/>
            <person name="Mikhailova N."/>
            <person name="Hazen T.C."/>
            <person name="Richardson P."/>
        </authorList>
    </citation>
    <scope>NUCLEOTIDE SEQUENCE [LARGE SCALE GENOMIC DNA]</scope>
    <source>
        <strain>DSM 19637 / Miyazaki F</strain>
    </source>
</reference>
<gene>
    <name evidence="1" type="primary">hemC</name>
    <name type="ordered locus">DvMF_0584</name>
</gene>
<feature type="chain" id="PRO_1000119213" description="Porphobilinogen deaminase">
    <location>
        <begin position="1"/>
        <end position="317"/>
    </location>
</feature>
<feature type="modified residue" description="S-(dipyrrolylmethanemethyl)cysteine" evidence="1">
    <location>
        <position position="240"/>
    </location>
</feature>
<sequence length="317" mass="33476">MKKLVIATRGSKLALWQAEHVKSCIEGQHPGVSVELLVLKTRGDIILDVPLAKVGGKGLFVKEIEEALLDGRADLAVHSMKDVPMELPEGLVLGIIPEREEPSDTFLSVHHDSLAALPHGATVGTSSLRRQSQLLALRPDLNVVSLRGNVDTRLRKLSEGQFDAIIMATAGMKRLGLSAPRSEVLGPPAFLPAVGQGALGIEFRADRADLHELLAFMEHTPTRIRVEAERGFLAGLQGGCQVPIAGHAVMTGDGTFALEGLVADLTGARVIRRTMNGVSAPDGAQARQIGLDLAAQLVADGAGEILAEVYGSGEAVN</sequence>
<proteinExistence type="inferred from homology"/>
<comment type="function">
    <text evidence="1">Tetrapolymerization of the monopyrrole PBG into the hydroxymethylbilane pre-uroporphyrinogen in several discrete steps.</text>
</comment>
<comment type="catalytic activity">
    <reaction evidence="1">
        <text>4 porphobilinogen + H2O = hydroxymethylbilane + 4 NH4(+)</text>
        <dbReference type="Rhea" id="RHEA:13185"/>
        <dbReference type="ChEBI" id="CHEBI:15377"/>
        <dbReference type="ChEBI" id="CHEBI:28938"/>
        <dbReference type="ChEBI" id="CHEBI:57845"/>
        <dbReference type="ChEBI" id="CHEBI:58126"/>
        <dbReference type="EC" id="2.5.1.61"/>
    </reaction>
</comment>
<comment type="cofactor">
    <cofactor evidence="1">
        <name>dipyrromethane</name>
        <dbReference type="ChEBI" id="CHEBI:60342"/>
    </cofactor>
    <text evidence="1">Binds 1 dipyrromethane group covalently.</text>
</comment>
<comment type="pathway">
    <text evidence="1">Porphyrin-containing compound metabolism; protoporphyrin-IX biosynthesis; coproporphyrinogen-III from 5-aminolevulinate: step 2/4.</text>
</comment>
<comment type="subunit">
    <text evidence="1">Monomer.</text>
</comment>
<comment type="miscellaneous">
    <text evidence="1">The porphobilinogen subunits are added to the dipyrromethane group.</text>
</comment>
<comment type="similarity">
    <text evidence="1">Belongs to the HMBS family.</text>
</comment>
<dbReference type="EC" id="2.5.1.61" evidence="1"/>
<dbReference type="EMBL" id="CP001197">
    <property type="protein sequence ID" value="ACL07541.1"/>
    <property type="molecule type" value="Genomic_DNA"/>
</dbReference>
<dbReference type="SMR" id="B8DKW2"/>
<dbReference type="STRING" id="883.DvMF_0584"/>
<dbReference type="KEGG" id="dvm:DvMF_0584"/>
<dbReference type="eggNOG" id="COG0181">
    <property type="taxonomic scope" value="Bacteria"/>
</dbReference>
<dbReference type="HOGENOM" id="CLU_019704_0_2_7"/>
<dbReference type="OrthoDB" id="9810298at2"/>
<dbReference type="UniPathway" id="UPA00251">
    <property type="reaction ID" value="UER00319"/>
</dbReference>
<dbReference type="GO" id="GO:0005737">
    <property type="term" value="C:cytoplasm"/>
    <property type="evidence" value="ECO:0007669"/>
    <property type="project" value="TreeGrafter"/>
</dbReference>
<dbReference type="GO" id="GO:0004418">
    <property type="term" value="F:hydroxymethylbilane synthase activity"/>
    <property type="evidence" value="ECO:0007669"/>
    <property type="project" value="UniProtKB-UniRule"/>
</dbReference>
<dbReference type="GO" id="GO:0006782">
    <property type="term" value="P:protoporphyrinogen IX biosynthetic process"/>
    <property type="evidence" value="ECO:0007669"/>
    <property type="project" value="UniProtKB-UniRule"/>
</dbReference>
<dbReference type="CDD" id="cd13646">
    <property type="entry name" value="PBP2_EcHMBS_like"/>
    <property type="match status" value="1"/>
</dbReference>
<dbReference type="FunFam" id="3.40.190.10:FF:000004">
    <property type="entry name" value="Porphobilinogen deaminase"/>
    <property type="match status" value="1"/>
</dbReference>
<dbReference type="FunFam" id="3.40.190.10:FF:000005">
    <property type="entry name" value="Porphobilinogen deaminase"/>
    <property type="match status" value="1"/>
</dbReference>
<dbReference type="Gene3D" id="3.40.190.10">
    <property type="entry name" value="Periplasmic binding protein-like II"/>
    <property type="match status" value="2"/>
</dbReference>
<dbReference type="Gene3D" id="3.30.160.40">
    <property type="entry name" value="Porphobilinogen deaminase, C-terminal domain"/>
    <property type="match status" value="1"/>
</dbReference>
<dbReference type="HAMAP" id="MF_00260">
    <property type="entry name" value="Porphobil_deam"/>
    <property type="match status" value="1"/>
</dbReference>
<dbReference type="InterPro" id="IPR000860">
    <property type="entry name" value="HemC"/>
</dbReference>
<dbReference type="InterPro" id="IPR022419">
    <property type="entry name" value="Porphobilin_deaminase_cofac_BS"/>
</dbReference>
<dbReference type="InterPro" id="IPR022417">
    <property type="entry name" value="Porphobilin_deaminase_N"/>
</dbReference>
<dbReference type="InterPro" id="IPR022418">
    <property type="entry name" value="Porphobilinogen_deaminase_C"/>
</dbReference>
<dbReference type="InterPro" id="IPR036803">
    <property type="entry name" value="Porphobilinogen_deaminase_C_sf"/>
</dbReference>
<dbReference type="NCBIfam" id="TIGR00212">
    <property type="entry name" value="hemC"/>
    <property type="match status" value="1"/>
</dbReference>
<dbReference type="PANTHER" id="PTHR11557">
    <property type="entry name" value="PORPHOBILINOGEN DEAMINASE"/>
    <property type="match status" value="1"/>
</dbReference>
<dbReference type="PANTHER" id="PTHR11557:SF0">
    <property type="entry name" value="PORPHOBILINOGEN DEAMINASE"/>
    <property type="match status" value="1"/>
</dbReference>
<dbReference type="Pfam" id="PF01379">
    <property type="entry name" value="Porphobil_deam"/>
    <property type="match status" value="1"/>
</dbReference>
<dbReference type="Pfam" id="PF03900">
    <property type="entry name" value="Porphobil_deamC"/>
    <property type="match status" value="1"/>
</dbReference>
<dbReference type="PIRSF" id="PIRSF001438">
    <property type="entry name" value="4pyrrol_synth_OHMeBilane_synth"/>
    <property type="match status" value="1"/>
</dbReference>
<dbReference type="PRINTS" id="PR00151">
    <property type="entry name" value="PORPHBDMNASE"/>
</dbReference>
<dbReference type="SUPFAM" id="SSF53850">
    <property type="entry name" value="Periplasmic binding protein-like II"/>
    <property type="match status" value="1"/>
</dbReference>
<dbReference type="SUPFAM" id="SSF54782">
    <property type="entry name" value="Porphobilinogen deaminase (hydroxymethylbilane synthase), C-terminal domain"/>
    <property type="match status" value="1"/>
</dbReference>
<dbReference type="PROSITE" id="PS00533">
    <property type="entry name" value="PORPHOBILINOGEN_DEAM"/>
    <property type="match status" value="1"/>
</dbReference>
<accession>B8DKW2</accession>
<name>HEM3_NITV9</name>